<name>STTH2_STRNR</name>
<evidence type="ECO:0000256" key="1">
    <source>
        <dbReference type="SAM" id="MobiDB-lite"/>
    </source>
</evidence>
<evidence type="ECO:0000269" key="2">
    <source>
    </source>
</evidence>
<evidence type="ECO:0000305" key="3"/>
<proteinExistence type="evidence at protein level"/>
<reference key="1">
    <citation type="journal article" date="2009" name="Biosci. Biotechnol. Biochem.">
        <title>The biological function of the bacterial isochorismatase-like hydrolase SttH.</title>
        <authorList>
            <person name="Maruyama C."/>
            <person name="Hamano Y."/>
        </authorList>
    </citation>
    <scope>NUCLEOTIDE SEQUENCE [GENOMIC DNA]</scope>
    <scope>FUNCTION</scope>
    <scope>CATALYTIC ACTIVITY</scope>
    <scope>BIOPHYSICOCHEMICAL PROPERTIES</scope>
    <scope>MUTAGENESIS OF CYS-158</scope>
    <source>
        <strain>ATCC 11455 / DSM 40635 / JCM 4922 / KCC S-0922 / NBRC 15452 / NCIMB 8593 / NRRL B-1714 / 48240</strain>
    </source>
</reference>
<gene>
    <name type="primary">sttH</name>
    <name type="synonym">sttH-sn</name>
</gene>
<organism>
    <name type="scientific">Streptomyces noursei</name>
    <name type="common">Streptomyces albulus</name>
    <dbReference type="NCBI Taxonomy" id="1971"/>
    <lineage>
        <taxon>Bacteria</taxon>
        <taxon>Bacillati</taxon>
        <taxon>Actinomycetota</taxon>
        <taxon>Actinomycetes</taxon>
        <taxon>Kitasatosporales</taxon>
        <taxon>Streptomycetaceae</taxon>
        <taxon>Streptomyces</taxon>
    </lineage>
</organism>
<keyword id="KW-0046">Antibiotic resistance</keyword>
<keyword id="KW-0378">Hydrolase</keyword>
<sequence length="252" mass="26136">MIRPGRCLWQPCLSGRKRSRPSGPVSRHGMMAAMTAPTAAAIRPVQALLVVDVQAAFVSGWEAVPDADRVLRCTRDLLSRARAAGALVVHLQNDGEPGAVDAPHTPGWELHLPVEPGPRERVVRKTEDDGFADTPLGDLLTDAGVTELAVCGVLSEMCVAATARTALVRGHRVVLPHDAHATYDIPAAPGISDTVPAAMSSRAAEWALGDEVEIVPHAAAVPFAAAPRPAVGPAAAPGLPVSPAAPPPSPVR</sequence>
<protein>
    <recommendedName>
        <fullName>Streptothricin hydrolase</fullName>
        <ecNumber>3.5.2.19</ecNumber>
    </recommendedName>
</protein>
<comment type="function">
    <text evidence="2">Catalyzes the hydrolysis of the amide bond of streptolidine lactam, thereby conferring streptothricin (ST) resistance. Can hydrolyze streptothricin-F and streptothricin-D. However, this strain is believed to be a ST nonproducer, which raises the possibility that its true role may not be its involvement in self-resistance to STs. May catalyze the hydrolysis of naturally occurring cyclic amide compounds that are structurally related to STs.</text>
</comment>
<comment type="catalytic activity">
    <reaction evidence="2">
        <text>streptothricin F + H2O = streptothricin F acid</text>
        <dbReference type="Rhea" id="RHEA:28138"/>
        <dbReference type="ChEBI" id="CHEBI:15377"/>
        <dbReference type="ChEBI" id="CHEBI:60822"/>
        <dbReference type="ChEBI" id="CHEBI:60838"/>
        <dbReference type="EC" id="3.5.2.19"/>
    </reaction>
</comment>
<comment type="biophysicochemical properties">
    <kinetics>
        <KM evidence="2">1.3 mM for streptothricin-F</KM>
        <KM evidence="2">3.2 mM for streptothricin-D</KM>
        <Vmax evidence="2">13.0 umol/min/mg enzyme with streptothricin-F as substrate</Vmax>
        <Vmax evidence="2">16.2 umol/min/mg enzyme with streptothricin-D as substrate</Vmax>
    </kinetics>
    <phDependence>
        <text evidence="2">Optimum pH is 7.0.</text>
    </phDependence>
    <temperatureDependence>
        <text evidence="2">Optimum temperature is 55 degrees Celsius.</text>
    </temperatureDependence>
</comment>
<comment type="similarity">
    <text evidence="3">Belongs to the isochorismatase family.</text>
</comment>
<dbReference type="EC" id="3.5.2.19"/>
<dbReference type="EMBL" id="AB512090">
    <property type="protein sequence ID" value="BAH84826.1"/>
    <property type="molecule type" value="Genomic_DNA"/>
</dbReference>
<dbReference type="SMR" id="C5NU54"/>
<dbReference type="KEGG" id="ag:BAH84826"/>
<dbReference type="BRENDA" id="3.5.2.19">
    <property type="organism ID" value="11755"/>
</dbReference>
<dbReference type="GO" id="GO:0016812">
    <property type="term" value="F:hydrolase activity, acting on carbon-nitrogen (but not peptide) bonds, in cyclic amides"/>
    <property type="evidence" value="ECO:0000314"/>
    <property type="project" value="UniProtKB"/>
</dbReference>
<dbReference type="GO" id="GO:0046677">
    <property type="term" value="P:response to antibiotic"/>
    <property type="evidence" value="ECO:0007669"/>
    <property type="project" value="UniProtKB-KW"/>
</dbReference>
<dbReference type="FunFam" id="3.40.50.850:FF:000018">
    <property type="entry name" value="Streptothricin hydrolase"/>
    <property type="match status" value="1"/>
</dbReference>
<dbReference type="Gene3D" id="3.40.50.850">
    <property type="entry name" value="Isochorismatase-like"/>
    <property type="match status" value="1"/>
</dbReference>
<dbReference type="InterPro" id="IPR000868">
    <property type="entry name" value="Isochorismatase-like_dom"/>
</dbReference>
<dbReference type="InterPro" id="IPR050272">
    <property type="entry name" value="Isochorismatase-like_hydrls"/>
</dbReference>
<dbReference type="InterPro" id="IPR036380">
    <property type="entry name" value="Isochorismatase-like_sf"/>
</dbReference>
<dbReference type="PANTHER" id="PTHR43540:SF1">
    <property type="entry name" value="ISOCHORISMATASE HYDROLASE"/>
    <property type="match status" value="1"/>
</dbReference>
<dbReference type="PANTHER" id="PTHR43540">
    <property type="entry name" value="PEROXYUREIDOACRYLATE/UREIDOACRYLATE AMIDOHYDROLASE-RELATED"/>
    <property type="match status" value="1"/>
</dbReference>
<dbReference type="Pfam" id="PF00857">
    <property type="entry name" value="Isochorismatase"/>
    <property type="match status" value="1"/>
</dbReference>
<dbReference type="SUPFAM" id="SSF52499">
    <property type="entry name" value="Isochorismatase-like hydrolases"/>
    <property type="match status" value="1"/>
</dbReference>
<accession>C5NU54</accession>
<feature type="chain" id="PRO_0000418976" description="Streptothricin hydrolase">
    <location>
        <begin position="1"/>
        <end position="252"/>
    </location>
</feature>
<feature type="region of interest" description="Disordered" evidence="1">
    <location>
        <begin position="230"/>
        <end position="252"/>
    </location>
</feature>
<feature type="compositionally biased region" description="Low complexity" evidence="1">
    <location>
        <begin position="230"/>
        <end position="242"/>
    </location>
</feature>
<feature type="compositionally biased region" description="Pro residues" evidence="1">
    <location>
        <begin position="243"/>
        <end position="252"/>
    </location>
</feature>
<feature type="active site" description="Nucleophile" evidence="3">
    <location>
        <position position="158"/>
    </location>
</feature>
<feature type="mutagenesis site" description="Loss of activity." evidence="2">
    <original>C</original>
    <variation>S</variation>
    <location>
        <position position="158"/>
    </location>
</feature>